<accession>Q2FWZ0</accession>
<organism>
    <name type="scientific">Staphylococcus aureus (strain NCTC 8325 / PS 47)</name>
    <dbReference type="NCBI Taxonomy" id="93061"/>
    <lineage>
        <taxon>Bacteria</taxon>
        <taxon>Bacillati</taxon>
        <taxon>Bacillota</taxon>
        <taxon>Bacilli</taxon>
        <taxon>Bacillales</taxon>
        <taxon>Staphylococcaceae</taxon>
        <taxon>Staphylococcus</taxon>
    </lineage>
</organism>
<name>GATB_STAA8</name>
<reference key="1">
    <citation type="book" date="2006" name="Gram positive pathogens, 2nd edition">
        <title>The Staphylococcus aureus NCTC 8325 genome.</title>
        <editorList>
            <person name="Fischetti V."/>
            <person name="Novick R."/>
            <person name="Ferretti J."/>
            <person name="Portnoy D."/>
            <person name="Rood J."/>
        </editorList>
        <authorList>
            <person name="Gillaspy A.F."/>
            <person name="Worrell V."/>
            <person name="Orvis J."/>
            <person name="Roe B.A."/>
            <person name="Dyer D.W."/>
            <person name="Iandolo J.J."/>
        </authorList>
    </citation>
    <scope>NUCLEOTIDE SEQUENCE [LARGE SCALE GENOMIC DNA]</scope>
    <source>
        <strain>NCTC 8325 / PS 47</strain>
    </source>
</reference>
<feature type="chain" id="PRO_1000016042" description="Aspartyl/glutamyl-tRNA(Asn/Gln) amidotransferase subunit B">
    <location>
        <begin position="1"/>
        <end position="475"/>
    </location>
</feature>
<comment type="function">
    <text evidence="1">Allows the formation of correctly charged Asn-tRNA(Asn) or Gln-tRNA(Gln) through the transamidation of misacylated Asp-tRNA(Asn) or Glu-tRNA(Gln) in organisms which lack either or both of asparaginyl-tRNA or glutaminyl-tRNA synthetases. The reaction takes place in the presence of glutamine and ATP through an activated phospho-Asp-tRNA(Asn) or phospho-Glu-tRNA(Gln).</text>
</comment>
<comment type="catalytic activity">
    <reaction evidence="1">
        <text>L-glutamyl-tRNA(Gln) + L-glutamine + ATP + H2O = L-glutaminyl-tRNA(Gln) + L-glutamate + ADP + phosphate + H(+)</text>
        <dbReference type="Rhea" id="RHEA:17521"/>
        <dbReference type="Rhea" id="RHEA-COMP:9681"/>
        <dbReference type="Rhea" id="RHEA-COMP:9684"/>
        <dbReference type="ChEBI" id="CHEBI:15377"/>
        <dbReference type="ChEBI" id="CHEBI:15378"/>
        <dbReference type="ChEBI" id="CHEBI:29985"/>
        <dbReference type="ChEBI" id="CHEBI:30616"/>
        <dbReference type="ChEBI" id="CHEBI:43474"/>
        <dbReference type="ChEBI" id="CHEBI:58359"/>
        <dbReference type="ChEBI" id="CHEBI:78520"/>
        <dbReference type="ChEBI" id="CHEBI:78521"/>
        <dbReference type="ChEBI" id="CHEBI:456216"/>
    </reaction>
</comment>
<comment type="catalytic activity">
    <reaction evidence="1">
        <text>L-aspartyl-tRNA(Asn) + L-glutamine + ATP + H2O = L-asparaginyl-tRNA(Asn) + L-glutamate + ADP + phosphate + 2 H(+)</text>
        <dbReference type="Rhea" id="RHEA:14513"/>
        <dbReference type="Rhea" id="RHEA-COMP:9674"/>
        <dbReference type="Rhea" id="RHEA-COMP:9677"/>
        <dbReference type="ChEBI" id="CHEBI:15377"/>
        <dbReference type="ChEBI" id="CHEBI:15378"/>
        <dbReference type="ChEBI" id="CHEBI:29985"/>
        <dbReference type="ChEBI" id="CHEBI:30616"/>
        <dbReference type="ChEBI" id="CHEBI:43474"/>
        <dbReference type="ChEBI" id="CHEBI:58359"/>
        <dbReference type="ChEBI" id="CHEBI:78515"/>
        <dbReference type="ChEBI" id="CHEBI:78516"/>
        <dbReference type="ChEBI" id="CHEBI:456216"/>
    </reaction>
</comment>
<comment type="subunit">
    <text evidence="1">Heterotrimer of A, B and C subunits.</text>
</comment>
<comment type="similarity">
    <text evidence="1">Belongs to the GatB/GatE family. GatB subfamily.</text>
</comment>
<proteinExistence type="inferred from homology"/>
<gene>
    <name evidence="1" type="primary">gatB</name>
    <name type="ordered locus">SAOUHSC_02116</name>
</gene>
<sequence length="475" mass="53657">MHFETVIGLEVHVELKTDSKMFSPSPAHFGAEPNSNTNVIDLAYPGVLPVVNKRAVDWAMRAAMALNMEIATESKFDRKNYFYPDNPKAYQISQFDQPIGENGYIDIEVDGETKRIGITRLHMEEDAGKSTHKGEYSLVDLNRQGTPLIEIVSEPDIRSPKEAYAYLEKLRSIIQYTGVSDVKMEEGSLRCDANISLRPYGQEKFGTKAELKNLNSFNYVRKGLEYEEKRQEEELLNGGEIGQETRRFDESTGKTILMRVKEGSDDYRYFPEPDIVPLYIDDAWKERVRQTIPELPDERKAKYVNELGLPAYDAHVLTLTKEMSDFFESTIEHGADVKLTSNWLMGGVNEYLNKNQVELLDTKLTPENLAGMIKLIEDGTMSSKIAKKVFPELAAKGGNAKQIMEDNGLVQISDEATLLKFVNEALDNNEQSVEDYKNGKGKAMGFLVGQIMKASKGQANPQLVNQLLKQELDKR</sequence>
<evidence type="ECO:0000255" key="1">
    <source>
        <dbReference type="HAMAP-Rule" id="MF_00121"/>
    </source>
</evidence>
<dbReference type="EC" id="6.3.5.-" evidence="1"/>
<dbReference type="EMBL" id="CP000253">
    <property type="protein sequence ID" value="ABD31166.1"/>
    <property type="molecule type" value="Genomic_DNA"/>
</dbReference>
<dbReference type="RefSeq" id="WP_000545370.1">
    <property type="nucleotide sequence ID" value="NZ_LS483365.1"/>
</dbReference>
<dbReference type="RefSeq" id="YP_500608.1">
    <property type="nucleotide sequence ID" value="NC_007795.1"/>
</dbReference>
<dbReference type="SMR" id="Q2FWZ0"/>
<dbReference type="STRING" id="93061.SAOUHSC_02116"/>
<dbReference type="PaxDb" id="1280-SAXN108_1998"/>
<dbReference type="GeneID" id="3921188"/>
<dbReference type="KEGG" id="sao:SAOUHSC_02116"/>
<dbReference type="PATRIC" id="fig|93061.5.peg.1920"/>
<dbReference type="eggNOG" id="COG0064">
    <property type="taxonomic scope" value="Bacteria"/>
</dbReference>
<dbReference type="HOGENOM" id="CLU_019240_0_0_9"/>
<dbReference type="OrthoDB" id="9804078at2"/>
<dbReference type="PRO" id="PR:Q2FWZ0"/>
<dbReference type="Proteomes" id="UP000008816">
    <property type="component" value="Chromosome"/>
</dbReference>
<dbReference type="GO" id="GO:0050566">
    <property type="term" value="F:asparaginyl-tRNA synthase (glutamine-hydrolyzing) activity"/>
    <property type="evidence" value="ECO:0007669"/>
    <property type="project" value="RHEA"/>
</dbReference>
<dbReference type="GO" id="GO:0005524">
    <property type="term" value="F:ATP binding"/>
    <property type="evidence" value="ECO:0007669"/>
    <property type="project" value="UniProtKB-KW"/>
</dbReference>
<dbReference type="GO" id="GO:0050567">
    <property type="term" value="F:glutaminyl-tRNA synthase (glutamine-hydrolyzing) activity"/>
    <property type="evidence" value="ECO:0000318"/>
    <property type="project" value="GO_Central"/>
</dbReference>
<dbReference type="GO" id="GO:0070681">
    <property type="term" value="P:glutaminyl-tRNAGln biosynthesis via transamidation"/>
    <property type="evidence" value="ECO:0000318"/>
    <property type="project" value="GO_Central"/>
</dbReference>
<dbReference type="GO" id="GO:0006412">
    <property type="term" value="P:translation"/>
    <property type="evidence" value="ECO:0007669"/>
    <property type="project" value="UniProtKB-UniRule"/>
</dbReference>
<dbReference type="FunFam" id="1.10.10.410:FF:000001">
    <property type="entry name" value="Aspartyl/glutamyl-tRNA(Asn/Gln) amidotransferase subunit B"/>
    <property type="match status" value="1"/>
</dbReference>
<dbReference type="FunFam" id="1.10.150.380:FF:000001">
    <property type="entry name" value="Aspartyl/glutamyl-tRNA(Asn/Gln) amidotransferase subunit B"/>
    <property type="match status" value="1"/>
</dbReference>
<dbReference type="Gene3D" id="1.10.10.410">
    <property type="match status" value="1"/>
</dbReference>
<dbReference type="Gene3D" id="1.10.150.380">
    <property type="entry name" value="GatB domain, N-terminal subdomain"/>
    <property type="match status" value="1"/>
</dbReference>
<dbReference type="HAMAP" id="MF_00121">
    <property type="entry name" value="GatB"/>
    <property type="match status" value="1"/>
</dbReference>
<dbReference type="InterPro" id="IPR017959">
    <property type="entry name" value="Asn/Gln-tRNA_amidoTrfase_suB/E"/>
</dbReference>
<dbReference type="InterPro" id="IPR006075">
    <property type="entry name" value="Asn/Gln-tRNA_Trfase_suB/E_cat"/>
</dbReference>
<dbReference type="InterPro" id="IPR018027">
    <property type="entry name" value="Asn/Gln_amidotransferase"/>
</dbReference>
<dbReference type="InterPro" id="IPR003789">
    <property type="entry name" value="Asn/Gln_tRNA_amidoTrase-B-like"/>
</dbReference>
<dbReference type="InterPro" id="IPR004413">
    <property type="entry name" value="GatB"/>
</dbReference>
<dbReference type="InterPro" id="IPR042114">
    <property type="entry name" value="GatB_C_1"/>
</dbReference>
<dbReference type="InterPro" id="IPR023168">
    <property type="entry name" value="GatB_Yqey_C_2"/>
</dbReference>
<dbReference type="InterPro" id="IPR017958">
    <property type="entry name" value="Gln-tRNA_amidoTrfase_suB_CS"/>
</dbReference>
<dbReference type="InterPro" id="IPR014746">
    <property type="entry name" value="Gln_synth/guanido_kin_cat_dom"/>
</dbReference>
<dbReference type="NCBIfam" id="TIGR00133">
    <property type="entry name" value="gatB"/>
    <property type="match status" value="1"/>
</dbReference>
<dbReference type="NCBIfam" id="NF004011">
    <property type="entry name" value="PRK05477.1-1"/>
    <property type="match status" value="1"/>
</dbReference>
<dbReference type="NCBIfam" id="NF004012">
    <property type="entry name" value="PRK05477.1-2"/>
    <property type="match status" value="1"/>
</dbReference>
<dbReference type="NCBIfam" id="NF004014">
    <property type="entry name" value="PRK05477.1-4"/>
    <property type="match status" value="1"/>
</dbReference>
<dbReference type="PANTHER" id="PTHR11659">
    <property type="entry name" value="GLUTAMYL-TRNA GLN AMIDOTRANSFERASE SUBUNIT B MITOCHONDRIAL AND PROKARYOTIC PET112-RELATED"/>
    <property type="match status" value="1"/>
</dbReference>
<dbReference type="PANTHER" id="PTHR11659:SF0">
    <property type="entry name" value="GLUTAMYL-TRNA(GLN) AMIDOTRANSFERASE SUBUNIT B, MITOCHONDRIAL"/>
    <property type="match status" value="1"/>
</dbReference>
<dbReference type="Pfam" id="PF02934">
    <property type="entry name" value="GatB_N"/>
    <property type="match status" value="1"/>
</dbReference>
<dbReference type="Pfam" id="PF02637">
    <property type="entry name" value="GatB_Yqey"/>
    <property type="match status" value="1"/>
</dbReference>
<dbReference type="SMART" id="SM00845">
    <property type="entry name" value="GatB_Yqey"/>
    <property type="match status" value="1"/>
</dbReference>
<dbReference type="SUPFAM" id="SSF89095">
    <property type="entry name" value="GatB/YqeY motif"/>
    <property type="match status" value="1"/>
</dbReference>
<dbReference type="SUPFAM" id="SSF55931">
    <property type="entry name" value="Glutamine synthetase/guanido kinase"/>
    <property type="match status" value="1"/>
</dbReference>
<dbReference type="PROSITE" id="PS01234">
    <property type="entry name" value="GATB"/>
    <property type="match status" value="1"/>
</dbReference>
<protein>
    <recommendedName>
        <fullName evidence="1">Aspartyl/glutamyl-tRNA(Asn/Gln) amidotransferase subunit B</fullName>
        <shortName evidence="1">Asp/Glu-ADT subunit B</shortName>
        <ecNumber evidence="1">6.3.5.-</ecNumber>
    </recommendedName>
</protein>
<keyword id="KW-0067">ATP-binding</keyword>
<keyword id="KW-0436">Ligase</keyword>
<keyword id="KW-0547">Nucleotide-binding</keyword>
<keyword id="KW-0648">Protein biosynthesis</keyword>
<keyword id="KW-1185">Reference proteome</keyword>